<keyword id="KW-0010">Activator</keyword>
<keyword id="KW-0238">DNA-binding</keyword>
<keyword id="KW-0539">Nucleus</keyword>
<keyword id="KW-0589">Pheromone response</keyword>
<keyword id="KW-0597">Phosphoprotein</keyword>
<keyword id="KW-1185">Reference proteome</keyword>
<keyword id="KW-0804">Transcription</keyword>
<keyword id="KW-0805">Transcription regulation</keyword>
<reference key="1">
    <citation type="journal article" date="1993" name="Genes Dev.">
        <title>Coupling of cell identity to signal response in yeast: interaction between the alpha-1 and STE12 proteins.</title>
        <authorList>
            <person name="Yuan Y.-L.O."/>
            <person name="Stroke I."/>
            <person name="Fields S."/>
        </authorList>
    </citation>
    <scope>NUCLEOTIDE SEQUENCE [GENOMIC DNA]</scope>
</reference>
<reference key="2">
    <citation type="journal article" date="2004" name="Nature">
        <title>Genome evolution in yeasts.</title>
        <authorList>
            <person name="Dujon B."/>
            <person name="Sherman D."/>
            <person name="Fischer G."/>
            <person name="Durrens P."/>
            <person name="Casaregola S."/>
            <person name="Lafontaine I."/>
            <person name="de Montigny J."/>
            <person name="Marck C."/>
            <person name="Neuveglise C."/>
            <person name="Talla E."/>
            <person name="Goffard N."/>
            <person name="Frangeul L."/>
            <person name="Aigle M."/>
            <person name="Anthouard V."/>
            <person name="Babour A."/>
            <person name="Barbe V."/>
            <person name="Barnay S."/>
            <person name="Blanchin S."/>
            <person name="Beckerich J.-M."/>
            <person name="Beyne E."/>
            <person name="Bleykasten C."/>
            <person name="Boisrame A."/>
            <person name="Boyer J."/>
            <person name="Cattolico L."/>
            <person name="Confanioleri F."/>
            <person name="de Daruvar A."/>
            <person name="Despons L."/>
            <person name="Fabre E."/>
            <person name="Fairhead C."/>
            <person name="Ferry-Dumazet H."/>
            <person name="Groppi A."/>
            <person name="Hantraye F."/>
            <person name="Hennequin C."/>
            <person name="Jauniaux N."/>
            <person name="Joyet P."/>
            <person name="Kachouri R."/>
            <person name="Kerrest A."/>
            <person name="Koszul R."/>
            <person name="Lemaire M."/>
            <person name="Lesur I."/>
            <person name="Ma L."/>
            <person name="Muller H."/>
            <person name="Nicaud J.-M."/>
            <person name="Nikolski M."/>
            <person name="Oztas S."/>
            <person name="Ozier-Kalogeropoulos O."/>
            <person name="Pellenz S."/>
            <person name="Potier S."/>
            <person name="Richard G.-F."/>
            <person name="Straub M.-L."/>
            <person name="Suleau A."/>
            <person name="Swennen D."/>
            <person name="Tekaia F."/>
            <person name="Wesolowski-Louvel M."/>
            <person name="Westhof E."/>
            <person name="Wirth B."/>
            <person name="Zeniou-Meyer M."/>
            <person name="Zivanovic Y."/>
            <person name="Bolotin-Fukuhara M."/>
            <person name="Thierry A."/>
            <person name="Bouchier C."/>
            <person name="Caudron B."/>
            <person name="Scarpelli C."/>
            <person name="Gaillardin C."/>
            <person name="Weissenbach J."/>
            <person name="Wincker P."/>
            <person name="Souciet J.-L."/>
        </authorList>
    </citation>
    <scope>NUCLEOTIDE SEQUENCE [LARGE SCALE GENOMIC DNA]</scope>
    <source>
        <strain>ATCC 8585 / CBS 2359 / DSM 70799 / NBRC 1267 / NRRL Y-1140 / WM37</strain>
    </source>
</reference>
<feature type="chain" id="PRO_0000072261" description="Protein STE12">
    <location>
        <begin position="1"/>
        <end position="666"/>
    </location>
</feature>
<feature type="DNA-binding region" evidence="1">
    <location>
        <begin position="51"/>
        <end position="161"/>
    </location>
</feature>
<feature type="region of interest" description="Disordered" evidence="2">
    <location>
        <begin position="1"/>
        <end position="25"/>
    </location>
</feature>
<feature type="region of interest" description="Disordered" evidence="2">
    <location>
        <begin position="205"/>
        <end position="245"/>
    </location>
</feature>
<feature type="region of interest" description="Disordered" evidence="2">
    <location>
        <begin position="409"/>
        <end position="477"/>
    </location>
</feature>
<feature type="region of interest" description="Disordered" evidence="2">
    <location>
        <begin position="605"/>
        <end position="666"/>
    </location>
</feature>
<feature type="compositionally biased region" description="Polar residues" evidence="2">
    <location>
        <begin position="1"/>
        <end position="24"/>
    </location>
</feature>
<feature type="compositionally biased region" description="Polar residues" evidence="2">
    <location>
        <begin position="214"/>
        <end position="237"/>
    </location>
</feature>
<feature type="compositionally biased region" description="Basic residues" evidence="2">
    <location>
        <begin position="414"/>
        <end position="423"/>
    </location>
</feature>
<feature type="compositionally biased region" description="Basic and acidic residues" evidence="2">
    <location>
        <begin position="425"/>
        <end position="435"/>
    </location>
</feature>
<feature type="compositionally biased region" description="Polar residues" evidence="2">
    <location>
        <begin position="438"/>
        <end position="450"/>
    </location>
</feature>
<feature type="compositionally biased region" description="Basic residues" evidence="2">
    <location>
        <begin position="623"/>
        <end position="638"/>
    </location>
</feature>
<feature type="compositionally biased region" description="Basic and acidic residues" evidence="2">
    <location>
        <begin position="655"/>
        <end position="666"/>
    </location>
</feature>
<feature type="sequence conflict" description="In Ref. 1; AAA35270." evidence="3" ref="1">
    <original>T</original>
    <variation>A</variation>
    <location>
        <position position="2"/>
    </location>
</feature>
<feature type="sequence conflict" description="In Ref. 1; AAA35270." evidence="3" ref="1">
    <original>A</original>
    <variation>R</variation>
    <location>
        <position position="44"/>
    </location>
</feature>
<feature type="sequence conflict" description="In Ref. 1; AAA35270." evidence="3" ref="1">
    <original>G</original>
    <variation>R</variation>
    <location>
        <position position="406"/>
    </location>
</feature>
<dbReference type="EMBL" id="L21156">
    <property type="protein sequence ID" value="AAA35270.1"/>
    <property type="molecule type" value="Genomic_DNA"/>
</dbReference>
<dbReference type="EMBL" id="CR382125">
    <property type="protein sequence ID" value="CAG99809.1"/>
    <property type="molecule type" value="Genomic_DNA"/>
</dbReference>
<dbReference type="PIR" id="A47650">
    <property type="entry name" value="A47650"/>
</dbReference>
<dbReference type="RefSeq" id="XP_454722.1">
    <property type="nucleotide sequence ID" value="XM_454722.1"/>
</dbReference>
<dbReference type="SMR" id="Q08400"/>
<dbReference type="DIP" id="DIP-234N"/>
<dbReference type="FunCoup" id="Q08400">
    <property type="interactions" value="2628"/>
</dbReference>
<dbReference type="STRING" id="284590.Q08400"/>
<dbReference type="PaxDb" id="284590-Q08400"/>
<dbReference type="KEGG" id="kla:KLLA0_E17139g"/>
<dbReference type="eggNOG" id="ENOG502QTVR">
    <property type="taxonomic scope" value="Eukaryota"/>
</dbReference>
<dbReference type="HOGENOM" id="CLU_019798_0_0_1"/>
<dbReference type="InParanoid" id="Q08400"/>
<dbReference type="Proteomes" id="UP000000598">
    <property type="component" value="Chromosome E"/>
</dbReference>
<dbReference type="GO" id="GO:0005634">
    <property type="term" value="C:nucleus"/>
    <property type="evidence" value="ECO:0007669"/>
    <property type="project" value="UniProtKB-SubCell"/>
</dbReference>
<dbReference type="GO" id="GO:1990526">
    <property type="term" value="C:Ste12p-Dig1p-Dig2p complex"/>
    <property type="evidence" value="ECO:0007669"/>
    <property type="project" value="TreeGrafter"/>
</dbReference>
<dbReference type="GO" id="GO:1990527">
    <property type="term" value="C:Tec1p-Ste12p-Dig1p complex"/>
    <property type="evidence" value="ECO:0007669"/>
    <property type="project" value="TreeGrafter"/>
</dbReference>
<dbReference type="GO" id="GO:0003677">
    <property type="term" value="F:DNA binding"/>
    <property type="evidence" value="ECO:0007669"/>
    <property type="project" value="UniProtKB-KW"/>
</dbReference>
<dbReference type="GO" id="GO:0003700">
    <property type="term" value="F:DNA-binding transcription factor activity"/>
    <property type="evidence" value="ECO:0007669"/>
    <property type="project" value="InterPro"/>
</dbReference>
<dbReference type="GO" id="GO:2000220">
    <property type="term" value="P:regulation of pseudohyphal growth"/>
    <property type="evidence" value="ECO:0007669"/>
    <property type="project" value="TreeGrafter"/>
</dbReference>
<dbReference type="GO" id="GO:0019236">
    <property type="term" value="P:response to pheromone"/>
    <property type="evidence" value="ECO:0007669"/>
    <property type="project" value="UniProtKB-KW"/>
</dbReference>
<dbReference type="GO" id="GO:0019953">
    <property type="term" value="P:sexual reproduction"/>
    <property type="evidence" value="ECO:0007669"/>
    <property type="project" value="TreeGrafter"/>
</dbReference>
<dbReference type="InterPro" id="IPR003120">
    <property type="entry name" value="Ste12"/>
</dbReference>
<dbReference type="InterPro" id="IPR052127">
    <property type="entry name" value="STE12_transcription_factor"/>
</dbReference>
<dbReference type="PANTHER" id="PTHR47427">
    <property type="entry name" value="PROTEIN STE12"/>
    <property type="match status" value="1"/>
</dbReference>
<dbReference type="PANTHER" id="PTHR47427:SF1">
    <property type="entry name" value="PROTEIN STE12"/>
    <property type="match status" value="1"/>
</dbReference>
<dbReference type="Pfam" id="PF02200">
    <property type="entry name" value="STE"/>
    <property type="match status" value="1"/>
</dbReference>
<dbReference type="SMART" id="SM00424">
    <property type="entry name" value="STE"/>
    <property type="match status" value="1"/>
</dbReference>
<evidence type="ECO:0000250" key="1"/>
<evidence type="ECO:0000256" key="2">
    <source>
        <dbReference type="SAM" id="MobiDB-lite"/>
    </source>
</evidence>
<evidence type="ECO:0000305" key="3"/>
<name>STE12_KLULA</name>
<comment type="function">
    <text evidence="1">Binds to the DNA sequence mediating pheromone induction (called the pheromone response element = PRE) which is found in the upstream control region of several a-, alpha- and haploid-specific genes. Involved in the mating process (By similarity).</text>
</comment>
<comment type="subcellular location">
    <subcellularLocation>
        <location>Nucleus</location>
    </subcellularLocation>
</comment>
<comment type="PTM">
    <text evidence="3">Phosphorylated by the STE7 and STE11 kinases.</text>
</comment>
<comment type="similarity">
    <text evidence="3">Belongs to the STE12 transcription factor family.</text>
</comment>
<sequence length="666" mass="75759">MTGSIVKTEDISSISGRGDTSQSPEEVEESLRLIEDLKFFLATAPANWQENQVIRRYYLSNDEGFVSCVFWNNLYYITGTDIVRCCAYRMQKFGREIVERKKFEEGIFSDLRNLKCGIDATLEKPKSDLLAFLYKNMCLKTQKKQKVFFWFSVPHDRLFADALERDLKRSSTGSQPTTRAVSEPALSFRWEANSDVSLYDQITNHVDSQRTDSRPSTVGAQDVTQKQNNRVTDTPVSASKDVEPFESNVVEDEVQIVDNNKMCYGLPHSESNNYVPQQLIVPQSDLERNELTNEFDELNADLKPSDILTSNQEDDDFPLDYFPVEIEYSQTSMDSSLHMASQGAKHPSQMMFYEDMDGMMLGPKYPISAGIYEDPFFREEMAASNASKYMMPPPMSATRAHFMTNGEYYSKSREGKKHGKSGRQHGPDDGRRDYDNENVGSSPSENQNPNEELDATENNQDADDNRSPDIYPPTDAMANDEYIPAYNRRMQMSESLVHPYTGMMLNPYMFCNMLAVDPSLNMGVNPVVDPFYGQNHSMDVAHDVYSPQEVVYPSNYRSTPKAAYFNMRSPYGRNFPPPSAMNPYYTPYHRRQPSSATRRYFSKANLINRKSKSPPRKNVVSKPSHKAPKKVNRTRHATSMHVGLGGKDSGNTSSESRDDSTKEDSN</sequence>
<gene>
    <name type="primary">STE12</name>
    <name type="ordered locus">KLLA0E17193g</name>
</gene>
<organism>
    <name type="scientific">Kluyveromyces lactis (strain ATCC 8585 / CBS 2359 / DSM 70799 / NBRC 1267 / NRRL Y-1140 / WM37)</name>
    <name type="common">Yeast</name>
    <name type="synonym">Candida sphaerica</name>
    <dbReference type="NCBI Taxonomy" id="284590"/>
    <lineage>
        <taxon>Eukaryota</taxon>
        <taxon>Fungi</taxon>
        <taxon>Dikarya</taxon>
        <taxon>Ascomycota</taxon>
        <taxon>Saccharomycotina</taxon>
        <taxon>Saccharomycetes</taxon>
        <taxon>Saccharomycetales</taxon>
        <taxon>Saccharomycetaceae</taxon>
        <taxon>Kluyveromyces</taxon>
    </lineage>
</organism>
<accession>Q08400</accession>
<accession>Q6CMW7</accession>
<protein>
    <recommendedName>
        <fullName>Protein STE12</fullName>
    </recommendedName>
</protein>
<proteinExistence type="inferred from homology"/>